<protein>
    <recommendedName>
        <fullName evidence="1">Ribulose bisphosphate carboxylase small subunit, chloroplastic</fullName>
        <shortName evidence="1">RuBisCO small subunit</shortName>
    </recommendedName>
</protein>
<gene>
    <name evidence="1" type="primary">RBCS</name>
</gene>
<evidence type="ECO:0000255" key="1">
    <source>
        <dbReference type="HAMAP-Rule" id="MF_00860"/>
    </source>
</evidence>
<dbReference type="EMBL" id="D14001">
    <property type="protein sequence ID" value="BAA03103.1"/>
    <property type="molecule type" value="mRNA"/>
</dbReference>
<dbReference type="SMR" id="Q40250"/>
<dbReference type="EnsemblPlants" id="rna-gnl|WGS:NBSK|LSAT_2X79481_mrna">
    <property type="protein sequence ID" value="cds-PLY88523.1"/>
    <property type="gene ID" value="gene-LSAT_2X79481"/>
</dbReference>
<dbReference type="Gramene" id="rna-gnl|WGS:NBSK|LSAT_2X79481_mrna">
    <property type="protein sequence ID" value="cds-PLY88523.1"/>
    <property type="gene ID" value="gene-LSAT_2X79481"/>
</dbReference>
<dbReference type="OrthoDB" id="561at2759"/>
<dbReference type="GO" id="GO:0009507">
    <property type="term" value="C:chloroplast"/>
    <property type="evidence" value="ECO:0007669"/>
    <property type="project" value="UniProtKB-SubCell"/>
</dbReference>
<dbReference type="GO" id="GO:0016984">
    <property type="term" value="F:ribulose-bisphosphate carboxylase activity"/>
    <property type="evidence" value="ECO:0007669"/>
    <property type="project" value="UniProtKB-UniRule"/>
</dbReference>
<dbReference type="GO" id="GO:0009853">
    <property type="term" value="P:photorespiration"/>
    <property type="evidence" value="ECO:0007669"/>
    <property type="project" value="UniProtKB-KW"/>
</dbReference>
<dbReference type="GO" id="GO:0019253">
    <property type="term" value="P:reductive pentose-phosphate cycle"/>
    <property type="evidence" value="ECO:0007669"/>
    <property type="project" value="UniProtKB-UniRule"/>
</dbReference>
<dbReference type="CDD" id="cd03527">
    <property type="entry name" value="RuBisCO_small"/>
    <property type="match status" value="1"/>
</dbReference>
<dbReference type="FunFam" id="3.30.190.10:FF:000001">
    <property type="entry name" value="Ribulose bisphosphate carboxylase small chain, chloroplastic"/>
    <property type="match status" value="1"/>
</dbReference>
<dbReference type="Gene3D" id="3.30.190.10">
    <property type="entry name" value="Ribulose bisphosphate carboxylase, small subunit"/>
    <property type="match status" value="1"/>
</dbReference>
<dbReference type="HAMAP" id="MF_00859">
    <property type="entry name" value="RuBisCO_S_bact"/>
    <property type="match status" value="1"/>
</dbReference>
<dbReference type="InterPro" id="IPR024681">
    <property type="entry name" value="RuBisCO_ssu"/>
</dbReference>
<dbReference type="InterPro" id="IPR000894">
    <property type="entry name" value="RuBisCO_ssu_dom"/>
</dbReference>
<dbReference type="InterPro" id="IPR024680">
    <property type="entry name" value="RuBisCO_ssu_N"/>
</dbReference>
<dbReference type="InterPro" id="IPR036385">
    <property type="entry name" value="RuBisCO_ssu_sf"/>
</dbReference>
<dbReference type="PANTHER" id="PTHR31262">
    <property type="entry name" value="RIBULOSE BISPHOSPHATE CARBOXYLASE SMALL CHAIN 1, CHLOROPLASTIC"/>
    <property type="match status" value="1"/>
</dbReference>
<dbReference type="PANTHER" id="PTHR31262:SF10">
    <property type="entry name" value="RIBULOSE BISPHOSPHATE CARBOXYLASE SMALL SUBUNIT 1A, CHLOROPLASTIC-RELATED"/>
    <property type="match status" value="1"/>
</dbReference>
<dbReference type="Pfam" id="PF12338">
    <property type="entry name" value="RbcS"/>
    <property type="match status" value="1"/>
</dbReference>
<dbReference type="Pfam" id="PF00101">
    <property type="entry name" value="RuBisCO_small"/>
    <property type="match status" value="1"/>
</dbReference>
<dbReference type="PRINTS" id="PR00152">
    <property type="entry name" value="RUBISCOSMALL"/>
</dbReference>
<dbReference type="SMART" id="SM00961">
    <property type="entry name" value="RuBisCO_small"/>
    <property type="match status" value="1"/>
</dbReference>
<dbReference type="SUPFAM" id="SSF55239">
    <property type="entry name" value="RuBisCO, small subunit"/>
    <property type="match status" value="1"/>
</dbReference>
<organism>
    <name type="scientific">Lactuca sativa</name>
    <name type="common">Garden lettuce</name>
    <dbReference type="NCBI Taxonomy" id="4236"/>
    <lineage>
        <taxon>Eukaryota</taxon>
        <taxon>Viridiplantae</taxon>
        <taxon>Streptophyta</taxon>
        <taxon>Embryophyta</taxon>
        <taxon>Tracheophyta</taxon>
        <taxon>Spermatophyta</taxon>
        <taxon>Magnoliopsida</taxon>
        <taxon>eudicotyledons</taxon>
        <taxon>Gunneridae</taxon>
        <taxon>Pentapetalae</taxon>
        <taxon>asterids</taxon>
        <taxon>campanulids</taxon>
        <taxon>Asterales</taxon>
        <taxon>Asteraceae</taxon>
        <taxon>Cichorioideae</taxon>
        <taxon>Cichorieae</taxon>
        <taxon>Lactucinae</taxon>
        <taxon>Lactuca</taxon>
    </lineage>
</organism>
<comment type="function">
    <text evidence="1">RuBisCO catalyzes two reactions: the carboxylation of D-ribulose 1,5-bisphosphate, the primary event in carbon dioxide fixation, as well as the oxidative fragmentation of the pentose substrate. Both reactions occur simultaneously and in competition at the same active site. Although the small subunit is not catalytic it is essential for maximal activity.</text>
</comment>
<comment type="subunit">
    <text evidence="1">Heterohexadecamer of 8 large and 8 small subunits.</text>
</comment>
<comment type="subcellular location">
    <subcellularLocation>
        <location evidence="1">Plastid</location>
        <location evidence="1">Chloroplast</location>
    </subcellularLocation>
</comment>
<comment type="miscellaneous">
    <text evidence="1">The basic functional RuBisCO is composed of a large chain homodimer in a 'head-to-tail' conformation. In form I RuBisCO this homodimer is arranged in a barrel-like tetramer with the small subunits forming a tetrameric 'cap' on each end of the 'barrel'.</text>
</comment>
<comment type="similarity">
    <text evidence="1">Belongs to the RuBisCO small chain family.</text>
</comment>
<sequence length="181" mass="20359">MASISSSAIATVNRTTSTQASLAAPFTGLKSNVAFPVTKKANNDFSSLPSNGGRVQCMKVWPPIGLKKYETLSYLPPLSDEALSKEIDYLIRNKWIPCLEFELEHGFVYREHHHSPGYYDGRYWTMWKLPMFGCTDSAQVMKEVGECKKEYPNAFIRVIGFDNIRQVQCISFIVAKPPGVL</sequence>
<reference key="1">
    <citation type="submission" date="1993-01" db="EMBL/GenBank/DDBJ databases">
        <authorList>
            <person name="Hanyuu K."/>
        </authorList>
    </citation>
    <scope>NUCLEOTIDE SEQUENCE [MRNA]</scope>
</reference>
<keyword id="KW-0113">Calvin cycle</keyword>
<keyword id="KW-0120">Carbon dioxide fixation</keyword>
<keyword id="KW-0150">Chloroplast</keyword>
<keyword id="KW-0601">Photorespiration</keyword>
<keyword id="KW-0602">Photosynthesis</keyword>
<keyword id="KW-0934">Plastid</keyword>
<keyword id="KW-0809">Transit peptide</keyword>
<name>RBS_LACSA</name>
<feature type="transit peptide" description="Chloroplast" evidence="1">
    <location>
        <begin position="1"/>
        <end position="56"/>
    </location>
</feature>
<feature type="chain" id="PRO_0000031510" description="Ribulose bisphosphate carboxylase small subunit, chloroplastic" evidence="1">
    <location>
        <begin position="57"/>
        <end position="181"/>
    </location>
</feature>
<accession>Q40250</accession>
<proteinExistence type="evidence at transcript level"/>